<sequence>KVYGRCELAAAMKRLGLDNYRGYSLGNWVCAAKFESNFNTHATNRNTDGSTDYGILQINSRWWCNDGRTPGSRNLCHISCSALLSSDITASVNCAKKIVSDRNGMNAWVAWRNRCKGTDVNAWIRGCRL</sequence>
<dbReference type="EC" id="3.2.1.17"/>
<dbReference type="PIR" id="JQ1041">
    <property type="entry name" value="JQ1041"/>
</dbReference>
<dbReference type="SMR" id="P24533"/>
<dbReference type="CAZy" id="GH22">
    <property type="family name" value="Glycoside Hydrolase Family 22"/>
</dbReference>
<dbReference type="GO" id="GO:0005576">
    <property type="term" value="C:extracellular region"/>
    <property type="evidence" value="ECO:0007669"/>
    <property type="project" value="UniProtKB-SubCell"/>
</dbReference>
<dbReference type="GO" id="GO:0003796">
    <property type="term" value="F:lysozyme activity"/>
    <property type="evidence" value="ECO:0007669"/>
    <property type="project" value="UniProtKB-EC"/>
</dbReference>
<dbReference type="GO" id="GO:0050829">
    <property type="term" value="P:defense response to Gram-negative bacterium"/>
    <property type="evidence" value="ECO:0007669"/>
    <property type="project" value="TreeGrafter"/>
</dbReference>
<dbReference type="GO" id="GO:0050830">
    <property type="term" value="P:defense response to Gram-positive bacterium"/>
    <property type="evidence" value="ECO:0007669"/>
    <property type="project" value="TreeGrafter"/>
</dbReference>
<dbReference type="GO" id="GO:0031640">
    <property type="term" value="P:killing of cells of another organism"/>
    <property type="evidence" value="ECO:0007669"/>
    <property type="project" value="UniProtKB-KW"/>
</dbReference>
<dbReference type="CDD" id="cd16897">
    <property type="entry name" value="LYZ_C"/>
    <property type="match status" value="1"/>
</dbReference>
<dbReference type="FunFam" id="1.10.530.10:FF:000001">
    <property type="entry name" value="Lysozyme C"/>
    <property type="match status" value="1"/>
</dbReference>
<dbReference type="Gene3D" id="1.10.530.10">
    <property type="match status" value="1"/>
</dbReference>
<dbReference type="InterPro" id="IPR001916">
    <property type="entry name" value="Glyco_hydro_22"/>
</dbReference>
<dbReference type="InterPro" id="IPR019799">
    <property type="entry name" value="Glyco_hydro_22_CS"/>
</dbReference>
<dbReference type="InterPro" id="IPR000974">
    <property type="entry name" value="Glyco_hydro_22_lys"/>
</dbReference>
<dbReference type="InterPro" id="IPR023346">
    <property type="entry name" value="Lysozyme-like_dom_sf"/>
</dbReference>
<dbReference type="PANTHER" id="PTHR11407">
    <property type="entry name" value="LYSOZYME C"/>
    <property type="match status" value="1"/>
</dbReference>
<dbReference type="PANTHER" id="PTHR11407:SF28">
    <property type="entry name" value="LYSOZYME C"/>
    <property type="match status" value="1"/>
</dbReference>
<dbReference type="Pfam" id="PF00062">
    <property type="entry name" value="Lys"/>
    <property type="match status" value="1"/>
</dbReference>
<dbReference type="PRINTS" id="PR00137">
    <property type="entry name" value="LYSOZYME"/>
</dbReference>
<dbReference type="PRINTS" id="PR00135">
    <property type="entry name" value="LYZLACT"/>
</dbReference>
<dbReference type="SMART" id="SM00263">
    <property type="entry name" value="LYZ1"/>
    <property type="match status" value="1"/>
</dbReference>
<dbReference type="SUPFAM" id="SSF53955">
    <property type="entry name" value="Lysozyme-like"/>
    <property type="match status" value="1"/>
</dbReference>
<dbReference type="PROSITE" id="PS00128">
    <property type="entry name" value="GLYCOSYL_HYDROL_F22_1"/>
    <property type="match status" value="1"/>
</dbReference>
<dbReference type="PROSITE" id="PS51348">
    <property type="entry name" value="GLYCOSYL_HYDROL_F22_2"/>
    <property type="match status" value="1"/>
</dbReference>
<proteinExistence type="evidence at protein level"/>
<protein>
    <recommendedName>
        <fullName>Lysozyme C</fullName>
        <ecNumber>3.2.1.17</ecNumber>
    </recommendedName>
    <alternativeName>
        <fullName>1,4-beta-N-acetylmuramidase</fullName>
    </alternativeName>
</protein>
<comment type="function">
    <text>Lysozymes have primarily a bacteriolytic function; those in tissues and body fluids are associated with the monocyte-macrophage system and enhance the activity of immunoagents.</text>
</comment>
<comment type="catalytic activity">
    <reaction>
        <text>Hydrolysis of (1-&gt;4)-beta-linkages between N-acetylmuramic acid and N-acetyl-D-glucosamine residues in a peptidoglycan and between N-acetyl-D-glucosamine residues in chitodextrins.</text>
        <dbReference type="EC" id="3.2.1.17"/>
    </reaction>
</comment>
<comment type="subunit">
    <text>Monomer.</text>
</comment>
<comment type="subcellular location">
    <subcellularLocation>
        <location>Secreted</location>
    </subcellularLocation>
</comment>
<comment type="miscellaneous">
    <text>Lysozyme C is capable of both hydrolysis and transglycosylation; it also shows a slight esterase activity. It acts rapidly on both peptide-substituted and unsubstituted peptidoglycan, and slowly on chitin oligosaccharides.</text>
</comment>
<comment type="similarity">
    <text evidence="1">Belongs to the glycosyl hydrolase 22 family.</text>
</comment>
<gene>
    <name type="primary">LYZ</name>
</gene>
<organism>
    <name type="scientific">Syrmaticus reevesii</name>
    <name type="common">Reeves's pheasant</name>
    <name type="synonym">Phasianus reevesii</name>
    <dbReference type="NCBI Taxonomy" id="9066"/>
    <lineage>
        <taxon>Eukaryota</taxon>
        <taxon>Metazoa</taxon>
        <taxon>Chordata</taxon>
        <taxon>Craniata</taxon>
        <taxon>Vertebrata</taxon>
        <taxon>Euteleostomi</taxon>
        <taxon>Archelosauria</taxon>
        <taxon>Archosauria</taxon>
        <taxon>Dinosauria</taxon>
        <taxon>Saurischia</taxon>
        <taxon>Theropoda</taxon>
        <taxon>Coelurosauria</taxon>
        <taxon>Aves</taxon>
        <taxon>Neognathae</taxon>
        <taxon>Galloanserae</taxon>
        <taxon>Galliformes</taxon>
        <taxon>Phasianidae</taxon>
        <taxon>Phasianinae</taxon>
        <taxon>Syrmaticus</taxon>
    </lineage>
</organism>
<accession>P24533</accession>
<evidence type="ECO:0000255" key="1">
    <source>
        <dbReference type="PROSITE-ProRule" id="PRU00680"/>
    </source>
</evidence>
<name>LYSC_SYRRE</name>
<reference key="1">
    <citation type="journal article" date="1991" name="Agric. Biol. Chem.">
        <title>The amino acid sequence of reeves' pheasant (Syrmaticus reevesii) lysozyme.</title>
        <authorList>
            <person name="Araki T."/>
            <person name="Kuramoto M."/>
            <person name="Torikata T."/>
        </authorList>
    </citation>
    <scope>PROTEIN SEQUENCE</scope>
    <source>
        <tissue>Egg white</tissue>
    </source>
</reference>
<feature type="chain" id="PRO_0000208873" description="Lysozyme C">
    <location>
        <begin position="1"/>
        <end position="129"/>
    </location>
</feature>
<feature type="domain" description="C-type lysozyme" evidence="1">
    <location>
        <begin position="1"/>
        <end position="129"/>
    </location>
</feature>
<feature type="active site" evidence="1">
    <location>
        <position position="35"/>
    </location>
</feature>
<feature type="active site" evidence="1">
    <location>
        <position position="52"/>
    </location>
</feature>
<feature type="disulfide bond" evidence="1">
    <location>
        <begin position="6"/>
        <end position="127"/>
    </location>
</feature>
<feature type="disulfide bond" evidence="1">
    <location>
        <begin position="30"/>
        <end position="115"/>
    </location>
</feature>
<feature type="disulfide bond" evidence="1">
    <location>
        <begin position="64"/>
        <end position="80"/>
    </location>
</feature>
<feature type="disulfide bond" evidence="1">
    <location>
        <begin position="76"/>
        <end position="94"/>
    </location>
</feature>
<keyword id="KW-0929">Antimicrobial</keyword>
<keyword id="KW-0081">Bacteriolytic enzyme</keyword>
<keyword id="KW-0903">Direct protein sequencing</keyword>
<keyword id="KW-1015">Disulfide bond</keyword>
<keyword id="KW-0326">Glycosidase</keyword>
<keyword id="KW-0378">Hydrolase</keyword>
<keyword id="KW-0964">Secreted</keyword>